<name>HUTI_SALHS</name>
<gene>
    <name evidence="1" type="primary">hutI</name>
    <name type="ordered locus">SeHA_C0914</name>
</gene>
<organism>
    <name type="scientific">Salmonella heidelberg (strain SL476)</name>
    <dbReference type="NCBI Taxonomy" id="454169"/>
    <lineage>
        <taxon>Bacteria</taxon>
        <taxon>Pseudomonadati</taxon>
        <taxon>Pseudomonadota</taxon>
        <taxon>Gammaproteobacteria</taxon>
        <taxon>Enterobacterales</taxon>
        <taxon>Enterobacteriaceae</taxon>
        <taxon>Salmonella</taxon>
    </lineage>
</organism>
<proteinExistence type="inferred from homology"/>
<sequence>MRQLLPGDTVWRNIRLATMDPQQQALYGLVDNQALIVREGHICDIVPETQLPVSGDNIHDMQGRLVTPGLIDCHTHLVFAGNRAAEWEQRLNGASYQHISAQGGGINATVSATRACAEETLYLLARERMMRLASEGVTLLEIKSGYGLELATEEKLLRVAAKLAAENAIDISPTLLAAHATPAEYRDDPDGYITLVCETMIPQLWQKGLFDAVDLFCESVGFNVAQSERVLQTAKALGIPVKGHVEQLSLLGGAQLVSRYQGLSADHIEYLDEVGVAAMRDGGTVGVLLPGAFYFLRETQRPPVELLRRYQVPVAVASDFNPGTSPFCSLHLAMNMACVQFGLTPEEAWAGVTRHAARALGRQATHGQIRAGYRADFVVWDAEQPVEIVYEPGRNPLYQRVYRGQIS</sequence>
<comment type="function">
    <text evidence="1">Catalyzes the hydrolytic cleavage of the carbon-nitrogen bond in imidazolone-5-propanoate to yield N-formimidoyl-L-glutamate. It is the third step in the universal histidine degradation pathway.</text>
</comment>
<comment type="catalytic activity">
    <reaction evidence="1">
        <text>4-imidazolone-5-propanoate + H2O = N-formimidoyl-L-glutamate</text>
        <dbReference type="Rhea" id="RHEA:23660"/>
        <dbReference type="ChEBI" id="CHEBI:15377"/>
        <dbReference type="ChEBI" id="CHEBI:58928"/>
        <dbReference type="ChEBI" id="CHEBI:77893"/>
        <dbReference type="EC" id="3.5.2.7"/>
    </reaction>
</comment>
<comment type="cofactor">
    <cofactor evidence="1">
        <name>Zn(2+)</name>
        <dbReference type="ChEBI" id="CHEBI:29105"/>
    </cofactor>
    <cofactor evidence="1">
        <name>Fe(3+)</name>
        <dbReference type="ChEBI" id="CHEBI:29034"/>
    </cofactor>
    <text evidence="1">Binds 1 zinc or iron ion per subunit.</text>
</comment>
<comment type="pathway">
    <text evidence="1">Amino-acid degradation; L-histidine degradation into L-glutamate; N-formimidoyl-L-glutamate from L-histidine: step 3/3.</text>
</comment>
<comment type="subcellular location">
    <subcellularLocation>
        <location evidence="1">Cytoplasm</location>
    </subcellularLocation>
</comment>
<comment type="similarity">
    <text evidence="1">Belongs to the metallo-dependent hydrolases superfamily. HutI family.</text>
</comment>
<evidence type="ECO:0000255" key="1">
    <source>
        <dbReference type="HAMAP-Rule" id="MF_00372"/>
    </source>
</evidence>
<protein>
    <recommendedName>
        <fullName evidence="1">Imidazolonepropionase</fullName>
        <ecNumber evidence="1">3.5.2.7</ecNumber>
    </recommendedName>
    <alternativeName>
        <fullName evidence="1">Imidazolone-5-propionate hydrolase</fullName>
    </alternativeName>
</protein>
<dbReference type="EC" id="3.5.2.7" evidence="1"/>
<dbReference type="EMBL" id="CP001120">
    <property type="protein sequence ID" value="ACF69866.1"/>
    <property type="molecule type" value="Genomic_DNA"/>
</dbReference>
<dbReference type="RefSeq" id="WP_001249473.1">
    <property type="nucleotide sequence ID" value="NC_011083.1"/>
</dbReference>
<dbReference type="SMR" id="B4TC41"/>
<dbReference type="KEGG" id="seh:SeHA_C0914"/>
<dbReference type="HOGENOM" id="CLU_041647_0_0_6"/>
<dbReference type="UniPathway" id="UPA00379">
    <property type="reaction ID" value="UER00551"/>
</dbReference>
<dbReference type="Proteomes" id="UP000001866">
    <property type="component" value="Chromosome"/>
</dbReference>
<dbReference type="GO" id="GO:0005737">
    <property type="term" value="C:cytoplasm"/>
    <property type="evidence" value="ECO:0007669"/>
    <property type="project" value="UniProtKB-SubCell"/>
</dbReference>
<dbReference type="GO" id="GO:0050480">
    <property type="term" value="F:imidazolonepropionase activity"/>
    <property type="evidence" value="ECO:0007669"/>
    <property type="project" value="UniProtKB-UniRule"/>
</dbReference>
<dbReference type="GO" id="GO:0005506">
    <property type="term" value="F:iron ion binding"/>
    <property type="evidence" value="ECO:0007669"/>
    <property type="project" value="UniProtKB-UniRule"/>
</dbReference>
<dbReference type="GO" id="GO:0008270">
    <property type="term" value="F:zinc ion binding"/>
    <property type="evidence" value="ECO:0007669"/>
    <property type="project" value="UniProtKB-UniRule"/>
</dbReference>
<dbReference type="GO" id="GO:0019556">
    <property type="term" value="P:L-histidine catabolic process to glutamate and formamide"/>
    <property type="evidence" value="ECO:0007669"/>
    <property type="project" value="UniProtKB-UniPathway"/>
</dbReference>
<dbReference type="GO" id="GO:0019557">
    <property type="term" value="P:L-histidine catabolic process to glutamate and formate"/>
    <property type="evidence" value="ECO:0007669"/>
    <property type="project" value="UniProtKB-UniPathway"/>
</dbReference>
<dbReference type="CDD" id="cd01296">
    <property type="entry name" value="Imidazolone-5PH"/>
    <property type="match status" value="1"/>
</dbReference>
<dbReference type="FunFam" id="3.20.20.140:FF:000007">
    <property type="entry name" value="Imidazolonepropionase"/>
    <property type="match status" value="1"/>
</dbReference>
<dbReference type="Gene3D" id="3.20.20.140">
    <property type="entry name" value="Metal-dependent hydrolases"/>
    <property type="match status" value="1"/>
</dbReference>
<dbReference type="Gene3D" id="2.30.40.10">
    <property type="entry name" value="Urease, subunit C, domain 1"/>
    <property type="match status" value="1"/>
</dbReference>
<dbReference type="HAMAP" id="MF_00372">
    <property type="entry name" value="HutI"/>
    <property type="match status" value="1"/>
</dbReference>
<dbReference type="InterPro" id="IPR006680">
    <property type="entry name" value="Amidohydro-rel"/>
</dbReference>
<dbReference type="InterPro" id="IPR005920">
    <property type="entry name" value="HutI"/>
</dbReference>
<dbReference type="InterPro" id="IPR011059">
    <property type="entry name" value="Metal-dep_hydrolase_composite"/>
</dbReference>
<dbReference type="InterPro" id="IPR032466">
    <property type="entry name" value="Metal_Hydrolase"/>
</dbReference>
<dbReference type="NCBIfam" id="TIGR01224">
    <property type="entry name" value="hutI"/>
    <property type="match status" value="1"/>
</dbReference>
<dbReference type="PANTHER" id="PTHR42752">
    <property type="entry name" value="IMIDAZOLONEPROPIONASE"/>
    <property type="match status" value="1"/>
</dbReference>
<dbReference type="PANTHER" id="PTHR42752:SF1">
    <property type="entry name" value="IMIDAZOLONEPROPIONASE-RELATED"/>
    <property type="match status" value="1"/>
</dbReference>
<dbReference type="Pfam" id="PF01979">
    <property type="entry name" value="Amidohydro_1"/>
    <property type="match status" value="1"/>
</dbReference>
<dbReference type="SUPFAM" id="SSF51338">
    <property type="entry name" value="Composite domain of metallo-dependent hydrolases"/>
    <property type="match status" value="1"/>
</dbReference>
<dbReference type="SUPFAM" id="SSF51556">
    <property type="entry name" value="Metallo-dependent hydrolases"/>
    <property type="match status" value="1"/>
</dbReference>
<accession>B4TC41</accession>
<feature type="chain" id="PRO_1000121553" description="Imidazolonepropionase">
    <location>
        <begin position="1"/>
        <end position="407"/>
    </location>
</feature>
<feature type="binding site" evidence="1">
    <location>
        <position position="74"/>
    </location>
    <ligand>
        <name>Fe(3+)</name>
        <dbReference type="ChEBI" id="CHEBI:29034"/>
    </ligand>
</feature>
<feature type="binding site" evidence="1">
    <location>
        <position position="74"/>
    </location>
    <ligand>
        <name>Zn(2+)</name>
        <dbReference type="ChEBI" id="CHEBI:29105"/>
    </ligand>
</feature>
<feature type="binding site" evidence="1">
    <location>
        <position position="76"/>
    </location>
    <ligand>
        <name>Fe(3+)</name>
        <dbReference type="ChEBI" id="CHEBI:29034"/>
    </ligand>
</feature>
<feature type="binding site" evidence="1">
    <location>
        <position position="76"/>
    </location>
    <ligand>
        <name>Zn(2+)</name>
        <dbReference type="ChEBI" id="CHEBI:29105"/>
    </ligand>
</feature>
<feature type="binding site" evidence="1">
    <location>
        <position position="83"/>
    </location>
    <ligand>
        <name>4-imidazolone-5-propanoate</name>
        <dbReference type="ChEBI" id="CHEBI:77893"/>
    </ligand>
</feature>
<feature type="binding site" evidence="1">
    <location>
        <position position="146"/>
    </location>
    <ligand>
        <name>4-imidazolone-5-propanoate</name>
        <dbReference type="ChEBI" id="CHEBI:77893"/>
    </ligand>
</feature>
<feature type="binding site" evidence="1">
    <location>
        <position position="146"/>
    </location>
    <ligand>
        <name>N-formimidoyl-L-glutamate</name>
        <dbReference type="ChEBI" id="CHEBI:58928"/>
    </ligand>
</feature>
<feature type="binding site" evidence="1">
    <location>
        <position position="179"/>
    </location>
    <ligand>
        <name>4-imidazolone-5-propanoate</name>
        <dbReference type="ChEBI" id="CHEBI:77893"/>
    </ligand>
</feature>
<feature type="binding site" evidence="1">
    <location>
        <position position="244"/>
    </location>
    <ligand>
        <name>Fe(3+)</name>
        <dbReference type="ChEBI" id="CHEBI:29034"/>
    </ligand>
</feature>
<feature type="binding site" evidence="1">
    <location>
        <position position="244"/>
    </location>
    <ligand>
        <name>Zn(2+)</name>
        <dbReference type="ChEBI" id="CHEBI:29105"/>
    </ligand>
</feature>
<feature type="binding site" evidence="1">
    <location>
        <position position="247"/>
    </location>
    <ligand>
        <name>4-imidazolone-5-propanoate</name>
        <dbReference type="ChEBI" id="CHEBI:77893"/>
    </ligand>
</feature>
<feature type="binding site" evidence="1">
    <location>
        <position position="319"/>
    </location>
    <ligand>
        <name>Fe(3+)</name>
        <dbReference type="ChEBI" id="CHEBI:29034"/>
    </ligand>
</feature>
<feature type="binding site" evidence="1">
    <location>
        <position position="319"/>
    </location>
    <ligand>
        <name>Zn(2+)</name>
        <dbReference type="ChEBI" id="CHEBI:29105"/>
    </ligand>
</feature>
<feature type="binding site" evidence="1">
    <location>
        <position position="321"/>
    </location>
    <ligand>
        <name>N-formimidoyl-L-glutamate</name>
        <dbReference type="ChEBI" id="CHEBI:58928"/>
    </ligand>
</feature>
<feature type="binding site" evidence="1">
    <location>
        <position position="323"/>
    </location>
    <ligand>
        <name>N-formimidoyl-L-glutamate</name>
        <dbReference type="ChEBI" id="CHEBI:58928"/>
    </ligand>
</feature>
<feature type="binding site" evidence="1">
    <location>
        <position position="324"/>
    </location>
    <ligand>
        <name>4-imidazolone-5-propanoate</name>
        <dbReference type="ChEBI" id="CHEBI:77893"/>
    </ligand>
</feature>
<keyword id="KW-0963">Cytoplasm</keyword>
<keyword id="KW-0369">Histidine metabolism</keyword>
<keyword id="KW-0378">Hydrolase</keyword>
<keyword id="KW-0408">Iron</keyword>
<keyword id="KW-0479">Metal-binding</keyword>
<keyword id="KW-0862">Zinc</keyword>
<reference key="1">
    <citation type="journal article" date="2011" name="J. Bacteriol.">
        <title>Comparative genomics of 28 Salmonella enterica isolates: evidence for CRISPR-mediated adaptive sublineage evolution.</title>
        <authorList>
            <person name="Fricke W.F."/>
            <person name="Mammel M.K."/>
            <person name="McDermott P.F."/>
            <person name="Tartera C."/>
            <person name="White D.G."/>
            <person name="Leclerc J.E."/>
            <person name="Ravel J."/>
            <person name="Cebula T.A."/>
        </authorList>
    </citation>
    <scope>NUCLEOTIDE SEQUENCE [LARGE SCALE GENOMIC DNA]</scope>
    <source>
        <strain>SL476</strain>
    </source>
</reference>